<keyword id="KW-0093">Biotin biosynthesis</keyword>
<keyword id="KW-0489">Methyltransferase</keyword>
<keyword id="KW-0949">S-adenosyl-L-methionine</keyword>
<keyword id="KW-0808">Transferase</keyword>
<feature type="chain" id="PRO_0000412510" description="Malonyl-[acyl-carrier protein] O-methyltransferase">
    <location>
        <begin position="1"/>
        <end position="270"/>
    </location>
</feature>
<proteinExistence type="inferred from homology"/>
<accession>A6W0X8</accession>
<dbReference type="EC" id="2.1.1.197" evidence="1"/>
<dbReference type="EMBL" id="CP000749">
    <property type="protein sequence ID" value="ABR72357.1"/>
    <property type="molecule type" value="Genomic_DNA"/>
</dbReference>
<dbReference type="SMR" id="A6W0X8"/>
<dbReference type="STRING" id="400668.Mmwyl1_3454"/>
<dbReference type="KEGG" id="mmw:Mmwyl1_3454"/>
<dbReference type="eggNOG" id="COG2226">
    <property type="taxonomic scope" value="Bacteria"/>
</dbReference>
<dbReference type="HOGENOM" id="CLU_046586_2_2_6"/>
<dbReference type="OrthoDB" id="9760689at2"/>
<dbReference type="UniPathway" id="UPA00078"/>
<dbReference type="GO" id="GO:0010340">
    <property type="term" value="F:carboxyl-O-methyltransferase activity"/>
    <property type="evidence" value="ECO:0007669"/>
    <property type="project" value="UniProtKB-UniRule"/>
</dbReference>
<dbReference type="GO" id="GO:0102130">
    <property type="term" value="F:malonyl-CoA methyltransferase activity"/>
    <property type="evidence" value="ECO:0007669"/>
    <property type="project" value="UniProtKB-EC"/>
</dbReference>
<dbReference type="GO" id="GO:0008757">
    <property type="term" value="F:S-adenosylmethionine-dependent methyltransferase activity"/>
    <property type="evidence" value="ECO:0007669"/>
    <property type="project" value="InterPro"/>
</dbReference>
<dbReference type="GO" id="GO:0009102">
    <property type="term" value="P:biotin biosynthetic process"/>
    <property type="evidence" value="ECO:0007669"/>
    <property type="project" value="UniProtKB-UniRule"/>
</dbReference>
<dbReference type="GO" id="GO:0032259">
    <property type="term" value="P:methylation"/>
    <property type="evidence" value="ECO:0007669"/>
    <property type="project" value="UniProtKB-KW"/>
</dbReference>
<dbReference type="CDD" id="cd02440">
    <property type="entry name" value="AdoMet_MTases"/>
    <property type="match status" value="1"/>
</dbReference>
<dbReference type="Gene3D" id="3.40.50.150">
    <property type="entry name" value="Vaccinia Virus protein VP39"/>
    <property type="match status" value="1"/>
</dbReference>
<dbReference type="HAMAP" id="MF_00835">
    <property type="entry name" value="BioC"/>
    <property type="match status" value="1"/>
</dbReference>
<dbReference type="InterPro" id="IPR011814">
    <property type="entry name" value="BioC"/>
</dbReference>
<dbReference type="InterPro" id="IPR013216">
    <property type="entry name" value="Methyltransf_11"/>
</dbReference>
<dbReference type="InterPro" id="IPR029063">
    <property type="entry name" value="SAM-dependent_MTases_sf"/>
</dbReference>
<dbReference type="NCBIfam" id="TIGR02072">
    <property type="entry name" value="BioC"/>
    <property type="match status" value="1"/>
</dbReference>
<dbReference type="PANTHER" id="PTHR43861:SF1">
    <property type="entry name" value="TRANS-ACONITATE 2-METHYLTRANSFERASE"/>
    <property type="match status" value="1"/>
</dbReference>
<dbReference type="PANTHER" id="PTHR43861">
    <property type="entry name" value="TRANS-ACONITATE 2-METHYLTRANSFERASE-RELATED"/>
    <property type="match status" value="1"/>
</dbReference>
<dbReference type="Pfam" id="PF08241">
    <property type="entry name" value="Methyltransf_11"/>
    <property type="match status" value="1"/>
</dbReference>
<dbReference type="SUPFAM" id="SSF53335">
    <property type="entry name" value="S-adenosyl-L-methionine-dependent methyltransferases"/>
    <property type="match status" value="1"/>
</dbReference>
<sequence length="270" mass="30062">MLITPDISALSYKRQLAKRFDRASQSYDSYADFQKVVLERLLAMLPLNQADVVLDLGTGTGQALGILSERLNPKCNIALDLSLQMLAVASERFSSLHNTHYVCADAERLPLQDRSCDLVFSSLAIQWCLSPLDLFKELYRVIKPGGYVVFSTLSQGSMPEISKAWFGLDNKEHVHQYMASDALLDSIRASELNLLSSQLSNISMWFDSPESAIYSLKKVGASLIASDGDPSVSPSKWKAFLLEYEKQRNELGIPLSYQVSFVVAQRPNSI</sequence>
<comment type="function">
    <text evidence="1">Converts the free carboxyl group of a malonyl-thioester to its methyl ester by transfer of a methyl group from S-adenosyl-L-methionine (SAM). It allows to synthesize pimeloyl-ACP via the fatty acid synthetic pathway.</text>
</comment>
<comment type="catalytic activity">
    <reaction evidence="1">
        <text>malonyl-[ACP] + S-adenosyl-L-methionine = malonyl-[ACP] methyl ester + S-adenosyl-L-homocysteine</text>
        <dbReference type="Rhea" id="RHEA:17105"/>
        <dbReference type="Rhea" id="RHEA-COMP:9623"/>
        <dbReference type="Rhea" id="RHEA-COMP:9954"/>
        <dbReference type="ChEBI" id="CHEBI:57856"/>
        <dbReference type="ChEBI" id="CHEBI:59789"/>
        <dbReference type="ChEBI" id="CHEBI:78449"/>
        <dbReference type="ChEBI" id="CHEBI:78845"/>
        <dbReference type="EC" id="2.1.1.197"/>
    </reaction>
</comment>
<comment type="pathway">
    <text evidence="1">Cofactor biosynthesis; biotin biosynthesis.</text>
</comment>
<comment type="similarity">
    <text evidence="1">Belongs to the methyltransferase superfamily.</text>
</comment>
<organism>
    <name type="scientific">Marinomonas sp. (strain MWYL1)</name>
    <dbReference type="NCBI Taxonomy" id="400668"/>
    <lineage>
        <taxon>Bacteria</taxon>
        <taxon>Pseudomonadati</taxon>
        <taxon>Pseudomonadota</taxon>
        <taxon>Gammaproteobacteria</taxon>
        <taxon>Oceanospirillales</taxon>
        <taxon>Oceanospirillaceae</taxon>
        <taxon>Marinomonas</taxon>
    </lineage>
</organism>
<name>BIOC_MARMS</name>
<protein>
    <recommendedName>
        <fullName evidence="1">Malonyl-[acyl-carrier protein] O-methyltransferase</fullName>
        <shortName evidence="1">Malonyl-ACP O-methyltransferase</shortName>
        <ecNumber evidence="1">2.1.1.197</ecNumber>
    </recommendedName>
    <alternativeName>
        <fullName evidence="1">Biotin synthesis protein BioC</fullName>
    </alternativeName>
</protein>
<reference key="1">
    <citation type="submission" date="2007-06" db="EMBL/GenBank/DDBJ databases">
        <title>Complete sequence of Marinomonas sp. MWYL1.</title>
        <authorList>
            <consortium name="US DOE Joint Genome Institute"/>
            <person name="Copeland A."/>
            <person name="Lucas S."/>
            <person name="Lapidus A."/>
            <person name="Barry K."/>
            <person name="Glavina del Rio T."/>
            <person name="Dalin E."/>
            <person name="Tice H."/>
            <person name="Pitluck S."/>
            <person name="Kiss H."/>
            <person name="Brettin T."/>
            <person name="Bruce D."/>
            <person name="Detter J.C."/>
            <person name="Han C."/>
            <person name="Schmutz J."/>
            <person name="Larimer F."/>
            <person name="Land M."/>
            <person name="Hauser L."/>
            <person name="Kyrpides N."/>
            <person name="Kim E."/>
            <person name="Johnston A.W.B."/>
            <person name="Todd J.D."/>
            <person name="Rogers R."/>
            <person name="Wexler M."/>
            <person name="Bond P.L."/>
            <person name="Li Y."/>
            <person name="Richardson P."/>
        </authorList>
    </citation>
    <scope>NUCLEOTIDE SEQUENCE [LARGE SCALE GENOMIC DNA]</scope>
    <source>
        <strain>MWYL1</strain>
    </source>
</reference>
<evidence type="ECO:0000255" key="1">
    <source>
        <dbReference type="HAMAP-Rule" id="MF_00835"/>
    </source>
</evidence>
<gene>
    <name evidence="1" type="primary">bioC</name>
    <name type="ordered locus">Mmwyl1_3454</name>
</gene>